<accession>Q12GX4</accession>
<sequence>MSRATPIQNYRNIGISAHIDAGKTTTTERILFYTGVNHKIGEVHDGAATMDWMEQEQERGITITSAATTCFWKGMDTSLPEHRINIIDTPGHVDFTIEVERSMRVLDGACMVYCAVGGVQPQSETVWRQANKYKVPRLAFVNKMDRTGANFFKVVEQMKLRLKASPVPMVIPIGAEENFTGVVDLLKMKAIIWDEASQGMKFTYSEIPAELVELAKEWREKMVEAAAESSEELMNKYLEEGDLTEAEIKLGIRTRTIASEIQPMYCGSAFKNKGVQRMLDAVIEFMPSPIDIPPVKGMDEDEAPVTRKADDEEKFSALAFKLMTDPFVGQLTFVRVYSGVLKKGDSVYNPIKGKKERIGRIVQMHANNREEVSEIRAGDIAACVGLKDVTTGETLCDPDAIVMLERMVFPEPVITQAVEPKTKADQEKMGIALQRLAQEDPSFRVKTDEESGQTLIAGMGELHLEIIVDRMKREFGVEANVGKPQVAYRETIRKTVEDAEGKFVRQSGGKGQYGHVVLKIEPNEAGKGIEFVDAIKGGVVPREYIPAVEKGINEAVTSGVLAGYPVVDVKVTLHFGSYHDVDSNELAFKMAAIFGFKEGCRKASPVILEPMMAVEVETPEDYAGNVMGDLSSRRGMVQGMEDMVGGGKAIKAEVPLSEMFGYSTTLRSMSQGRATYSMEFKHYSEAPRNVSEAIMASRAK</sequence>
<evidence type="ECO:0000255" key="1">
    <source>
        <dbReference type="HAMAP-Rule" id="MF_00054"/>
    </source>
</evidence>
<comment type="function">
    <text evidence="1">Catalyzes the GTP-dependent ribosomal translocation step during translation elongation. During this step, the ribosome changes from the pre-translocational (PRE) to the post-translocational (POST) state as the newly formed A-site-bound peptidyl-tRNA and P-site-bound deacylated tRNA move to the P and E sites, respectively. Catalyzes the coordinated movement of the two tRNA molecules, the mRNA and conformational changes in the ribosome.</text>
</comment>
<comment type="subcellular location">
    <subcellularLocation>
        <location evidence="1">Cytoplasm</location>
    </subcellularLocation>
</comment>
<comment type="similarity">
    <text evidence="1">Belongs to the TRAFAC class translation factor GTPase superfamily. Classic translation factor GTPase family. EF-G/EF-2 subfamily.</text>
</comment>
<organism>
    <name type="scientific">Polaromonas sp. (strain JS666 / ATCC BAA-500)</name>
    <dbReference type="NCBI Taxonomy" id="296591"/>
    <lineage>
        <taxon>Bacteria</taxon>
        <taxon>Pseudomonadati</taxon>
        <taxon>Pseudomonadota</taxon>
        <taxon>Betaproteobacteria</taxon>
        <taxon>Burkholderiales</taxon>
        <taxon>Comamonadaceae</taxon>
        <taxon>Polaromonas</taxon>
    </lineage>
</organism>
<feature type="chain" id="PRO_0000263481" description="Elongation factor G 1">
    <location>
        <begin position="1"/>
        <end position="700"/>
    </location>
</feature>
<feature type="domain" description="tr-type G">
    <location>
        <begin position="8"/>
        <end position="290"/>
    </location>
</feature>
<feature type="binding site" evidence="1">
    <location>
        <begin position="17"/>
        <end position="24"/>
    </location>
    <ligand>
        <name>GTP</name>
        <dbReference type="ChEBI" id="CHEBI:37565"/>
    </ligand>
</feature>
<feature type="binding site" evidence="1">
    <location>
        <begin position="88"/>
        <end position="92"/>
    </location>
    <ligand>
        <name>GTP</name>
        <dbReference type="ChEBI" id="CHEBI:37565"/>
    </ligand>
</feature>
<feature type="binding site" evidence="1">
    <location>
        <begin position="142"/>
        <end position="145"/>
    </location>
    <ligand>
        <name>GTP</name>
        <dbReference type="ChEBI" id="CHEBI:37565"/>
    </ligand>
</feature>
<dbReference type="EMBL" id="CP000316">
    <property type="protein sequence ID" value="ABE42218.1"/>
    <property type="molecule type" value="Genomic_DNA"/>
</dbReference>
<dbReference type="RefSeq" id="WP_011481227.1">
    <property type="nucleotide sequence ID" value="NC_007948.1"/>
</dbReference>
<dbReference type="SMR" id="Q12GX4"/>
<dbReference type="STRING" id="296591.Bpro_0253"/>
<dbReference type="KEGG" id="pol:Bpro_0253"/>
<dbReference type="eggNOG" id="COG0480">
    <property type="taxonomic scope" value="Bacteria"/>
</dbReference>
<dbReference type="HOGENOM" id="CLU_002794_4_1_4"/>
<dbReference type="OrthoDB" id="9804431at2"/>
<dbReference type="Proteomes" id="UP000001983">
    <property type="component" value="Chromosome"/>
</dbReference>
<dbReference type="GO" id="GO:0005737">
    <property type="term" value="C:cytoplasm"/>
    <property type="evidence" value="ECO:0007669"/>
    <property type="project" value="UniProtKB-SubCell"/>
</dbReference>
<dbReference type="GO" id="GO:0005525">
    <property type="term" value="F:GTP binding"/>
    <property type="evidence" value="ECO:0007669"/>
    <property type="project" value="UniProtKB-UniRule"/>
</dbReference>
<dbReference type="GO" id="GO:0003924">
    <property type="term" value="F:GTPase activity"/>
    <property type="evidence" value="ECO:0007669"/>
    <property type="project" value="InterPro"/>
</dbReference>
<dbReference type="GO" id="GO:0097216">
    <property type="term" value="F:guanosine tetraphosphate binding"/>
    <property type="evidence" value="ECO:0007669"/>
    <property type="project" value="UniProtKB-ARBA"/>
</dbReference>
<dbReference type="GO" id="GO:0003746">
    <property type="term" value="F:translation elongation factor activity"/>
    <property type="evidence" value="ECO:0007669"/>
    <property type="project" value="UniProtKB-UniRule"/>
</dbReference>
<dbReference type="GO" id="GO:0032790">
    <property type="term" value="P:ribosome disassembly"/>
    <property type="evidence" value="ECO:0007669"/>
    <property type="project" value="TreeGrafter"/>
</dbReference>
<dbReference type="CDD" id="cd01886">
    <property type="entry name" value="EF-G"/>
    <property type="match status" value="1"/>
</dbReference>
<dbReference type="CDD" id="cd16262">
    <property type="entry name" value="EFG_III"/>
    <property type="match status" value="1"/>
</dbReference>
<dbReference type="CDD" id="cd01434">
    <property type="entry name" value="EFG_mtEFG1_IV"/>
    <property type="match status" value="1"/>
</dbReference>
<dbReference type="CDD" id="cd03713">
    <property type="entry name" value="EFG_mtEFG_C"/>
    <property type="match status" value="1"/>
</dbReference>
<dbReference type="CDD" id="cd04088">
    <property type="entry name" value="EFG_mtEFG_II"/>
    <property type="match status" value="1"/>
</dbReference>
<dbReference type="FunFam" id="2.40.30.10:FF:000006">
    <property type="entry name" value="Elongation factor G"/>
    <property type="match status" value="1"/>
</dbReference>
<dbReference type="FunFam" id="3.30.230.10:FF:000003">
    <property type="entry name" value="Elongation factor G"/>
    <property type="match status" value="1"/>
</dbReference>
<dbReference type="FunFam" id="3.30.70.240:FF:000001">
    <property type="entry name" value="Elongation factor G"/>
    <property type="match status" value="1"/>
</dbReference>
<dbReference type="FunFam" id="3.30.70.870:FF:000001">
    <property type="entry name" value="Elongation factor G"/>
    <property type="match status" value="1"/>
</dbReference>
<dbReference type="FunFam" id="3.40.50.300:FF:000029">
    <property type="entry name" value="Elongation factor G"/>
    <property type="match status" value="1"/>
</dbReference>
<dbReference type="Gene3D" id="3.30.230.10">
    <property type="match status" value="1"/>
</dbReference>
<dbReference type="Gene3D" id="3.30.70.240">
    <property type="match status" value="1"/>
</dbReference>
<dbReference type="Gene3D" id="3.30.70.870">
    <property type="entry name" value="Elongation Factor G (Translational Gtpase), domain 3"/>
    <property type="match status" value="1"/>
</dbReference>
<dbReference type="Gene3D" id="3.40.50.300">
    <property type="entry name" value="P-loop containing nucleotide triphosphate hydrolases"/>
    <property type="match status" value="1"/>
</dbReference>
<dbReference type="Gene3D" id="2.40.30.10">
    <property type="entry name" value="Translation factors"/>
    <property type="match status" value="1"/>
</dbReference>
<dbReference type="HAMAP" id="MF_00054_B">
    <property type="entry name" value="EF_G_EF_2_B"/>
    <property type="match status" value="1"/>
</dbReference>
<dbReference type="InterPro" id="IPR041095">
    <property type="entry name" value="EFG_II"/>
</dbReference>
<dbReference type="InterPro" id="IPR009022">
    <property type="entry name" value="EFG_III"/>
</dbReference>
<dbReference type="InterPro" id="IPR035647">
    <property type="entry name" value="EFG_III/V"/>
</dbReference>
<dbReference type="InterPro" id="IPR047872">
    <property type="entry name" value="EFG_IV"/>
</dbReference>
<dbReference type="InterPro" id="IPR035649">
    <property type="entry name" value="EFG_V"/>
</dbReference>
<dbReference type="InterPro" id="IPR000640">
    <property type="entry name" value="EFG_V-like"/>
</dbReference>
<dbReference type="InterPro" id="IPR004161">
    <property type="entry name" value="EFTu-like_2"/>
</dbReference>
<dbReference type="InterPro" id="IPR031157">
    <property type="entry name" value="G_TR_CS"/>
</dbReference>
<dbReference type="InterPro" id="IPR027417">
    <property type="entry name" value="P-loop_NTPase"/>
</dbReference>
<dbReference type="InterPro" id="IPR020568">
    <property type="entry name" value="Ribosomal_Su5_D2-typ_SF"/>
</dbReference>
<dbReference type="InterPro" id="IPR014721">
    <property type="entry name" value="Ribsml_uS5_D2-typ_fold_subgr"/>
</dbReference>
<dbReference type="InterPro" id="IPR005225">
    <property type="entry name" value="Small_GTP-bd"/>
</dbReference>
<dbReference type="InterPro" id="IPR000795">
    <property type="entry name" value="T_Tr_GTP-bd_dom"/>
</dbReference>
<dbReference type="InterPro" id="IPR009000">
    <property type="entry name" value="Transl_B-barrel_sf"/>
</dbReference>
<dbReference type="InterPro" id="IPR004540">
    <property type="entry name" value="Transl_elong_EFG/EF2"/>
</dbReference>
<dbReference type="InterPro" id="IPR005517">
    <property type="entry name" value="Transl_elong_EFG/EF2_IV"/>
</dbReference>
<dbReference type="NCBIfam" id="TIGR00484">
    <property type="entry name" value="EF-G"/>
    <property type="match status" value="1"/>
</dbReference>
<dbReference type="NCBIfam" id="NF009381">
    <property type="entry name" value="PRK12740.1-5"/>
    <property type="match status" value="1"/>
</dbReference>
<dbReference type="NCBIfam" id="TIGR00231">
    <property type="entry name" value="small_GTP"/>
    <property type="match status" value="1"/>
</dbReference>
<dbReference type="PANTHER" id="PTHR43261:SF1">
    <property type="entry name" value="RIBOSOME-RELEASING FACTOR 2, MITOCHONDRIAL"/>
    <property type="match status" value="1"/>
</dbReference>
<dbReference type="PANTHER" id="PTHR43261">
    <property type="entry name" value="TRANSLATION ELONGATION FACTOR G-RELATED"/>
    <property type="match status" value="1"/>
</dbReference>
<dbReference type="Pfam" id="PF00679">
    <property type="entry name" value="EFG_C"/>
    <property type="match status" value="1"/>
</dbReference>
<dbReference type="Pfam" id="PF14492">
    <property type="entry name" value="EFG_III"/>
    <property type="match status" value="1"/>
</dbReference>
<dbReference type="Pfam" id="PF03764">
    <property type="entry name" value="EFG_IV"/>
    <property type="match status" value="1"/>
</dbReference>
<dbReference type="Pfam" id="PF00009">
    <property type="entry name" value="GTP_EFTU"/>
    <property type="match status" value="1"/>
</dbReference>
<dbReference type="Pfam" id="PF03144">
    <property type="entry name" value="GTP_EFTU_D2"/>
    <property type="match status" value="1"/>
</dbReference>
<dbReference type="PRINTS" id="PR00315">
    <property type="entry name" value="ELONGATNFCT"/>
</dbReference>
<dbReference type="SMART" id="SM00838">
    <property type="entry name" value="EFG_C"/>
    <property type="match status" value="1"/>
</dbReference>
<dbReference type="SMART" id="SM00889">
    <property type="entry name" value="EFG_IV"/>
    <property type="match status" value="1"/>
</dbReference>
<dbReference type="SUPFAM" id="SSF54980">
    <property type="entry name" value="EF-G C-terminal domain-like"/>
    <property type="match status" value="2"/>
</dbReference>
<dbReference type="SUPFAM" id="SSF52540">
    <property type="entry name" value="P-loop containing nucleoside triphosphate hydrolases"/>
    <property type="match status" value="1"/>
</dbReference>
<dbReference type="SUPFAM" id="SSF54211">
    <property type="entry name" value="Ribosomal protein S5 domain 2-like"/>
    <property type="match status" value="1"/>
</dbReference>
<dbReference type="SUPFAM" id="SSF50447">
    <property type="entry name" value="Translation proteins"/>
    <property type="match status" value="1"/>
</dbReference>
<dbReference type="PROSITE" id="PS00301">
    <property type="entry name" value="G_TR_1"/>
    <property type="match status" value="1"/>
</dbReference>
<dbReference type="PROSITE" id="PS51722">
    <property type="entry name" value="G_TR_2"/>
    <property type="match status" value="1"/>
</dbReference>
<name>EFG1_POLSJ</name>
<reference key="1">
    <citation type="journal article" date="2008" name="Appl. Environ. Microbiol.">
        <title>The genome of Polaromonas sp. strain JS666: insights into the evolution of a hydrocarbon- and xenobiotic-degrading bacterium, and features of relevance to biotechnology.</title>
        <authorList>
            <person name="Mattes T.E."/>
            <person name="Alexander A.K."/>
            <person name="Richardson P.M."/>
            <person name="Munk A.C."/>
            <person name="Han C.S."/>
            <person name="Stothard P."/>
            <person name="Coleman N.V."/>
        </authorList>
    </citation>
    <scope>NUCLEOTIDE SEQUENCE [LARGE SCALE GENOMIC DNA]</scope>
    <source>
        <strain>JS666 / ATCC BAA-500</strain>
    </source>
</reference>
<protein>
    <recommendedName>
        <fullName evidence="1">Elongation factor G 1</fullName>
        <shortName evidence="1">EF-G 1</shortName>
    </recommendedName>
</protein>
<proteinExistence type="inferred from homology"/>
<gene>
    <name evidence="1" type="primary">fusA1</name>
    <name type="ordered locus">Bpro_0253</name>
</gene>
<keyword id="KW-0963">Cytoplasm</keyword>
<keyword id="KW-0251">Elongation factor</keyword>
<keyword id="KW-0342">GTP-binding</keyword>
<keyword id="KW-0547">Nucleotide-binding</keyword>
<keyword id="KW-0648">Protein biosynthesis</keyword>
<keyword id="KW-1185">Reference proteome</keyword>